<evidence type="ECO:0000255" key="1">
    <source>
        <dbReference type="HAMAP-Rule" id="MF_00258"/>
    </source>
</evidence>
<protein>
    <recommendedName>
        <fullName evidence="1">Glutamate racemase</fullName>
        <ecNumber evidence="1">5.1.1.3</ecNumber>
    </recommendedName>
</protein>
<accession>P63641</accession>
<accession>Q97NX2</accession>
<gene>
    <name evidence="1" type="primary">murI</name>
    <name type="ordered locus">spr1696</name>
</gene>
<comment type="function">
    <text evidence="1">Provides the (R)-glutamate required for cell wall biosynthesis.</text>
</comment>
<comment type="catalytic activity">
    <reaction evidence="1">
        <text>L-glutamate = D-glutamate</text>
        <dbReference type="Rhea" id="RHEA:12813"/>
        <dbReference type="ChEBI" id="CHEBI:29985"/>
        <dbReference type="ChEBI" id="CHEBI:29986"/>
        <dbReference type="EC" id="5.1.1.3"/>
    </reaction>
</comment>
<comment type="pathway">
    <text evidence="1">Cell wall biogenesis; peptidoglycan biosynthesis.</text>
</comment>
<comment type="similarity">
    <text evidence="1">Belongs to the aspartate/glutamate racemases family.</text>
</comment>
<proteinExistence type="inferred from homology"/>
<sequence>MDNRPIGFLDSGVGGLTVVRELMRQLPHEEIVYIGDSARAPYGPRPAEQIREYTWQLVNFLLTKDVKMIVIACNTATAVVWEEIKAQLDIPVLGVILPGASAAIKSSQGGKIGVIGTPMTVQSDIYRQKIHDLDPDLQVESLACPKFAPLVESGALSTSVTKKVVYETLRPLVGKVDSLILGCTHYPLLRPIIQNVMGPKVQLIDSGAECVRDISVLLNYFEINRGRDAGPLHHRFYTTASSQSFAQIGEEWLEKEIHVEHVEL</sequence>
<reference key="1">
    <citation type="journal article" date="2001" name="J. Bacteriol.">
        <title>Genome of the bacterium Streptococcus pneumoniae strain R6.</title>
        <authorList>
            <person name="Hoskins J."/>
            <person name="Alborn W.E. Jr."/>
            <person name="Arnold J."/>
            <person name="Blaszczak L.C."/>
            <person name="Burgett S."/>
            <person name="DeHoff B.S."/>
            <person name="Estrem S.T."/>
            <person name="Fritz L."/>
            <person name="Fu D.-J."/>
            <person name="Fuller W."/>
            <person name="Geringer C."/>
            <person name="Gilmour R."/>
            <person name="Glass J.S."/>
            <person name="Khoja H."/>
            <person name="Kraft A.R."/>
            <person name="Lagace R.E."/>
            <person name="LeBlanc D.J."/>
            <person name="Lee L.N."/>
            <person name="Lefkowitz E.J."/>
            <person name="Lu J."/>
            <person name="Matsushima P."/>
            <person name="McAhren S.M."/>
            <person name="McHenney M."/>
            <person name="McLeaster K."/>
            <person name="Mundy C.W."/>
            <person name="Nicas T.I."/>
            <person name="Norris F.H."/>
            <person name="O'Gara M."/>
            <person name="Peery R.B."/>
            <person name="Robertson G.T."/>
            <person name="Rockey P."/>
            <person name="Sun P.-M."/>
            <person name="Winkler M.E."/>
            <person name="Yang Y."/>
            <person name="Young-Bellido M."/>
            <person name="Zhao G."/>
            <person name="Zook C.A."/>
            <person name="Baltz R.H."/>
            <person name="Jaskunas S.R."/>
            <person name="Rosteck P.R. Jr."/>
            <person name="Skatrud P.L."/>
            <person name="Glass J.I."/>
        </authorList>
    </citation>
    <scope>NUCLEOTIDE SEQUENCE [LARGE SCALE GENOMIC DNA]</scope>
    <source>
        <strain>ATCC BAA-255 / R6</strain>
    </source>
</reference>
<feature type="chain" id="PRO_0000095520" description="Glutamate racemase">
    <location>
        <begin position="1"/>
        <end position="264"/>
    </location>
</feature>
<feature type="active site" description="Proton donor/acceptor" evidence="1">
    <location>
        <position position="73"/>
    </location>
</feature>
<feature type="active site" description="Proton donor/acceptor" evidence="1">
    <location>
        <position position="183"/>
    </location>
</feature>
<feature type="binding site" evidence="1">
    <location>
        <begin position="10"/>
        <end position="11"/>
    </location>
    <ligand>
        <name>substrate</name>
    </ligand>
</feature>
<feature type="binding site" evidence="1">
    <location>
        <begin position="42"/>
        <end position="43"/>
    </location>
    <ligand>
        <name>substrate</name>
    </ligand>
</feature>
<feature type="binding site" evidence="1">
    <location>
        <begin position="74"/>
        <end position="75"/>
    </location>
    <ligand>
        <name>substrate</name>
    </ligand>
</feature>
<feature type="binding site" evidence="1">
    <location>
        <begin position="184"/>
        <end position="185"/>
    </location>
    <ligand>
        <name>substrate</name>
    </ligand>
</feature>
<organism>
    <name type="scientific">Streptococcus pneumoniae (strain ATCC BAA-255 / R6)</name>
    <dbReference type="NCBI Taxonomy" id="171101"/>
    <lineage>
        <taxon>Bacteria</taxon>
        <taxon>Bacillati</taxon>
        <taxon>Bacillota</taxon>
        <taxon>Bacilli</taxon>
        <taxon>Lactobacillales</taxon>
        <taxon>Streptococcaceae</taxon>
        <taxon>Streptococcus</taxon>
    </lineage>
</organism>
<name>MURI_STRR6</name>
<keyword id="KW-0133">Cell shape</keyword>
<keyword id="KW-0961">Cell wall biogenesis/degradation</keyword>
<keyword id="KW-0413">Isomerase</keyword>
<keyword id="KW-0573">Peptidoglycan synthesis</keyword>
<keyword id="KW-1185">Reference proteome</keyword>
<dbReference type="EC" id="5.1.1.3" evidence="1"/>
<dbReference type="EMBL" id="AE007317">
    <property type="protein sequence ID" value="AAL00499.1"/>
    <property type="molecule type" value="Genomic_DNA"/>
</dbReference>
<dbReference type="PIR" id="F98083">
    <property type="entry name" value="F98083"/>
</dbReference>
<dbReference type="RefSeq" id="NP_359288.1">
    <property type="nucleotide sequence ID" value="NC_003098.1"/>
</dbReference>
<dbReference type="SMR" id="P63641"/>
<dbReference type="STRING" id="171101.spr1696"/>
<dbReference type="KEGG" id="spr:spr1696"/>
<dbReference type="PATRIC" id="fig|171101.6.peg.1834"/>
<dbReference type="eggNOG" id="COG0796">
    <property type="taxonomic scope" value="Bacteria"/>
</dbReference>
<dbReference type="HOGENOM" id="CLU_052344_0_2_9"/>
<dbReference type="UniPathway" id="UPA00219"/>
<dbReference type="Proteomes" id="UP000000586">
    <property type="component" value="Chromosome"/>
</dbReference>
<dbReference type="GO" id="GO:0008881">
    <property type="term" value="F:glutamate racemase activity"/>
    <property type="evidence" value="ECO:0000318"/>
    <property type="project" value="GO_Central"/>
</dbReference>
<dbReference type="GO" id="GO:0071555">
    <property type="term" value="P:cell wall organization"/>
    <property type="evidence" value="ECO:0007669"/>
    <property type="project" value="UniProtKB-KW"/>
</dbReference>
<dbReference type="GO" id="GO:0009252">
    <property type="term" value="P:peptidoglycan biosynthetic process"/>
    <property type="evidence" value="ECO:0000318"/>
    <property type="project" value="GO_Central"/>
</dbReference>
<dbReference type="GO" id="GO:0008360">
    <property type="term" value="P:regulation of cell shape"/>
    <property type="evidence" value="ECO:0007669"/>
    <property type="project" value="UniProtKB-KW"/>
</dbReference>
<dbReference type="FunFam" id="3.40.50.1860:FF:000002">
    <property type="entry name" value="Glutamate racemase"/>
    <property type="match status" value="1"/>
</dbReference>
<dbReference type="Gene3D" id="3.40.50.1860">
    <property type="match status" value="2"/>
</dbReference>
<dbReference type="HAMAP" id="MF_00258">
    <property type="entry name" value="Glu_racemase"/>
    <property type="match status" value="1"/>
</dbReference>
<dbReference type="InterPro" id="IPR015942">
    <property type="entry name" value="Asp/Glu/hydantoin_racemase"/>
</dbReference>
<dbReference type="InterPro" id="IPR001920">
    <property type="entry name" value="Asp/Glu_race"/>
</dbReference>
<dbReference type="InterPro" id="IPR018187">
    <property type="entry name" value="Asp/Glu_racemase_AS_1"/>
</dbReference>
<dbReference type="InterPro" id="IPR033134">
    <property type="entry name" value="Asp/Glu_racemase_AS_2"/>
</dbReference>
<dbReference type="InterPro" id="IPR004391">
    <property type="entry name" value="Glu_race"/>
</dbReference>
<dbReference type="NCBIfam" id="TIGR00067">
    <property type="entry name" value="glut_race"/>
    <property type="match status" value="1"/>
</dbReference>
<dbReference type="NCBIfam" id="NF002035">
    <property type="entry name" value="PRK00865.1-3"/>
    <property type="match status" value="1"/>
</dbReference>
<dbReference type="PANTHER" id="PTHR21198">
    <property type="entry name" value="GLUTAMATE RACEMASE"/>
    <property type="match status" value="1"/>
</dbReference>
<dbReference type="PANTHER" id="PTHR21198:SF2">
    <property type="entry name" value="GLUTAMATE RACEMASE"/>
    <property type="match status" value="1"/>
</dbReference>
<dbReference type="Pfam" id="PF01177">
    <property type="entry name" value="Asp_Glu_race"/>
    <property type="match status" value="1"/>
</dbReference>
<dbReference type="SUPFAM" id="SSF53681">
    <property type="entry name" value="Aspartate/glutamate racemase"/>
    <property type="match status" value="2"/>
</dbReference>
<dbReference type="PROSITE" id="PS00923">
    <property type="entry name" value="ASP_GLU_RACEMASE_1"/>
    <property type="match status" value="1"/>
</dbReference>
<dbReference type="PROSITE" id="PS00924">
    <property type="entry name" value="ASP_GLU_RACEMASE_2"/>
    <property type="match status" value="1"/>
</dbReference>